<keyword id="KW-0067">ATP-binding</keyword>
<keyword id="KW-0963">Cytoplasm</keyword>
<keyword id="KW-0227">DNA damage</keyword>
<keyword id="KW-0233">DNA recombination</keyword>
<keyword id="KW-0234">DNA repair</keyword>
<keyword id="KW-0238">DNA-binding</keyword>
<keyword id="KW-0547">Nucleotide-binding</keyword>
<keyword id="KW-1185">Reference proteome</keyword>
<keyword id="KW-0742">SOS response</keyword>
<organism>
    <name type="scientific">Salmonella typhimurium (strain LT2 / SGSC1412 / ATCC 700720)</name>
    <dbReference type="NCBI Taxonomy" id="99287"/>
    <lineage>
        <taxon>Bacteria</taxon>
        <taxon>Pseudomonadati</taxon>
        <taxon>Pseudomonadota</taxon>
        <taxon>Gammaproteobacteria</taxon>
        <taxon>Enterobacterales</taxon>
        <taxon>Enterobacteriaceae</taxon>
        <taxon>Salmonella</taxon>
    </lineage>
</organism>
<accession>P65977</accession>
<accession>Q8XET0</accession>
<evidence type="ECO:0000255" key="1">
    <source>
        <dbReference type="HAMAP-Rule" id="MF_00268"/>
    </source>
</evidence>
<protein>
    <recommendedName>
        <fullName evidence="1">Protein RecA</fullName>
    </recommendedName>
    <alternativeName>
        <fullName evidence="1">Recombinase A</fullName>
    </alternativeName>
</protein>
<reference key="1">
    <citation type="journal article" date="2001" name="Nature">
        <title>Complete genome sequence of Salmonella enterica serovar Typhimurium LT2.</title>
        <authorList>
            <person name="McClelland M."/>
            <person name="Sanderson K.E."/>
            <person name="Spieth J."/>
            <person name="Clifton S.W."/>
            <person name="Latreille P."/>
            <person name="Courtney L."/>
            <person name="Porwollik S."/>
            <person name="Ali J."/>
            <person name="Dante M."/>
            <person name="Du F."/>
            <person name="Hou S."/>
            <person name="Layman D."/>
            <person name="Leonard S."/>
            <person name="Nguyen C."/>
            <person name="Scott K."/>
            <person name="Holmes A."/>
            <person name="Grewal N."/>
            <person name="Mulvaney E."/>
            <person name="Ryan E."/>
            <person name="Sun H."/>
            <person name="Florea L."/>
            <person name="Miller W."/>
            <person name="Stoneking T."/>
            <person name="Nhan M."/>
            <person name="Waterston R."/>
            <person name="Wilson R.K."/>
        </authorList>
    </citation>
    <scope>NUCLEOTIDE SEQUENCE [LARGE SCALE GENOMIC DNA]</scope>
    <source>
        <strain>LT2 / SGSC1412 / ATCC 700720</strain>
    </source>
</reference>
<proteinExistence type="evidence at protein level"/>
<dbReference type="EMBL" id="AE006468">
    <property type="protein sequence ID" value="AAL21709.1"/>
    <property type="molecule type" value="Genomic_DNA"/>
</dbReference>
<dbReference type="RefSeq" id="NP_461750.1">
    <property type="nucleotide sequence ID" value="NC_003197.2"/>
</dbReference>
<dbReference type="RefSeq" id="WP_000963150.1">
    <property type="nucleotide sequence ID" value="NC_003197.2"/>
</dbReference>
<dbReference type="SMR" id="P65977"/>
<dbReference type="IntAct" id="P65977">
    <property type="interactions" value="1"/>
</dbReference>
<dbReference type="STRING" id="99287.STM2829"/>
<dbReference type="PaxDb" id="99287-STM2829"/>
<dbReference type="GeneID" id="1254352"/>
<dbReference type="KEGG" id="stm:STM2829"/>
<dbReference type="PATRIC" id="fig|99287.12.peg.2983"/>
<dbReference type="HOGENOM" id="CLU_040469_3_2_6"/>
<dbReference type="OMA" id="DSKMGLH"/>
<dbReference type="PhylomeDB" id="P65977"/>
<dbReference type="BioCyc" id="SENT99287:STM2829-MONOMER"/>
<dbReference type="Proteomes" id="UP000001014">
    <property type="component" value="Chromosome"/>
</dbReference>
<dbReference type="GO" id="GO:0005737">
    <property type="term" value="C:cytoplasm"/>
    <property type="evidence" value="ECO:0007669"/>
    <property type="project" value="UniProtKB-SubCell"/>
</dbReference>
<dbReference type="GO" id="GO:0005524">
    <property type="term" value="F:ATP binding"/>
    <property type="evidence" value="ECO:0007669"/>
    <property type="project" value="UniProtKB-UniRule"/>
</dbReference>
<dbReference type="GO" id="GO:0016887">
    <property type="term" value="F:ATP hydrolysis activity"/>
    <property type="evidence" value="ECO:0007669"/>
    <property type="project" value="InterPro"/>
</dbReference>
<dbReference type="GO" id="GO:0140664">
    <property type="term" value="F:ATP-dependent DNA damage sensor activity"/>
    <property type="evidence" value="ECO:0007669"/>
    <property type="project" value="InterPro"/>
</dbReference>
<dbReference type="GO" id="GO:0003684">
    <property type="term" value="F:damaged DNA binding"/>
    <property type="evidence" value="ECO:0007669"/>
    <property type="project" value="UniProtKB-UniRule"/>
</dbReference>
<dbReference type="GO" id="GO:0003697">
    <property type="term" value="F:single-stranded DNA binding"/>
    <property type="evidence" value="ECO:0007669"/>
    <property type="project" value="UniProtKB-UniRule"/>
</dbReference>
<dbReference type="GO" id="GO:0006310">
    <property type="term" value="P:DNA recombination"/>
    <property type="evidence" value="ECO:0007669"/>
    <property type="project" value="UniProtKB-UniRule"/>
</dbReference>
<dbReference type="GO" id="GO:0006281">
    <property type="term" value="P:DNA repair"/>
    <property type="evidence" value="ECO:0007669"/>
    <property type="project" value="UniProtKB-UniRule"/>
</dbReference>
<dbReference type="GO" id="GO:0050918">
    <property type="term" value="P:positive chemotaxis"/>
    <property type="evidence" value="ECO:0000315"/>
    <property type="project" value="AgBase"/>
</dbReference>
<dbReference type="GO" id="GO:1903911">
    <property type="term" value="P:positive regulation of receptor clustering"/>
    <property type="evidence" value="ECO:0000315"/>
    <property type="project" value="AgBase"/>
</dbReference>
<dbReference type="GO" id="GO:1902021">
    <property type="term" value="P:regulation of bacterial-type flagellum-dependent cell motility"/>
    <property type="evidence" value="ECO:0000315"/>
    <property type="project" value="AgBase"/>
</dbReference>
<dbReference type="GO" id="GO:0009432">
    <property type="term" value="P:SOS response"/>
    <property type="evidence" value="ECO:0007669"/>
    <property type="project" value="UniProtKB-UniRule"/>
</dbReference>
<dbReference type="CDD" id="cd00983">
    <property type="entry name" value="RecA"/>
    <property type="match status" value="1"/>
</dbReference>
<dbReference type="FunFam" id="3.40.50.300:FF:000087">
    <property type="entry name" value="Recombinase RecA"/>
    <property type="match status" value="1"/>
</dbReference>
<dbReference type="Gene3D" id="3.40.50.300">
    <property type="entry name" value="P-loop containing nucleotide triphosphate hydrolases"/>
    <property type="match status" value="1"/>
</dbReference>
<dbReference type="HAMAP" id="MF_00268">
    <property type="entry name" value="RecA"/>
    <property type="match status" value="1"/>
</dbReference>
<dbReference type="InterPro" id="IPR003593">
    <property type="entry name" value="AAA+_ATPase"/>
</dbReference>
<dbReference type="InterPro" id="IPR013765">
    <property type="entry name" value="DNA_recomb/repair_RecA"/>
</dbReference>
<dbReference type="InterPro" id="IPR020584">
    <property type="entry name" value="DNA_recomb/repair_RecA_CS"/>
</dbReference>
<dbReference type="InterPro" id="IPR027417">
    <property type="entry name" value="P-loop_NTPase"/>
</dbReference>
<dbReference type="InterPro" id="IPR049261">
    <property type="entry name" value="RecA-like_C"/>
</dbReference>
<dbReference type="InterPro" id="IPR049428">
    <property type="entry name" value="RecA-like_N"/>
</dbReference>
<dbReference type="InterPro" id="IPR020588">
    <property type="entry name" value="RecA_ATP-bd"/>
</dbReference>
<dbReference type="InterPro" id="IPR023400">
    <property type="entry name" value="RecA_C_sf"/>
</dbReference>
<dbReference type="InterPro" id="IPR020587">
    <property type="entry name" value="RecA_monomer-monomer_interface"/>
</dbReference>
<dbReference type="NCBIfam" id="TIGR02012">
    <property type="entry name" value="tigrfam_recA"/>
    <property type="match status" value="1"/>
</dbReference>
<dbReference type="PANTHER" id="PTHR45900:SF1">
    <property type="entry name" value="MITOCHONDRIAL DNA REPAIR PROTEIN RECA HOMOLOG-RELATED"/>
    <property type="match status" value="1"/>
</dbReference>
<dbReference type="PANTHER" id="PTHR45900">
    <property type="entry name" value="RECA"/>
    <property type="match status" value="1"/>
</dbReference>
<dbReference type="Pfam" id="PF00154">
    <property type="entry name" value="RecA"/>
    <property type="match status" value="1"/>
</dbReference>
<dbReference type="Pfam" id="PF21096">
    <property type="entry name" value="RecA_C"/>
    <property type="match status" value="1"/>
</dbReference>
<dbReference type="PRINTS" id="PR00142">
    <property type="entry name" value="RECA"/>
</dbReference>
<dbReference type="SMART" id="SM00382">
    <property type="entry name" value="AAA"/>
    <property type="match status" value="1"/>
</dbReference>
<dbReference type="SUPFAM" id="SSF52540">
    <property type="entry name" value="P-loop containing nucleoside triphosphate hydrolases"/>
    <property type="match status" value="1"/>
</dbReference>
<dbReference type="SUPFAM" id="SSF54752">
    <property type="entry name" value="RecA protein, C-terminal domain"/>
    <property type="match status" value="1"/>
</dbReference>
<dbReference type="PROSITE" id="PS00321">
    <property type="entry name" value="RECA_1"/>
    <property type="match status" value="1"/>
</dbReference>
<dbReference type="PROSITE" id="PS50162">
    <property type="entry name" value="RECA_2"/>
    <property type="match status" value="1"/>
</dbReference>
<dbReference type="PROSITE" id="PS50163">
    <property type="entry name" value="RECA_3"/>
    <property type="match status" value="1"/>
</dbReference>
<gene>
    <name evidence="1" type="primary">recA</name>
    <name type="ordered locus">STM2829</name>
</gene>
<name>RECA_SALTY</name>
<comment type="function">
    <text evidence="1">Can catalyze the hydrolysis of ATP in the presence of single-stranded DNA, the ATP-dependent uptake of single-stranded DNA by duplex DNA, and the ATP-dependent hybridization of homologous single-stranded DNAs. It interacts with LexA causing its activation and leading to its autocatalytic cleavage.</text>
</comment>
<comment type="interaction">
    <interactant intactId="EBI-10686930">
        <id>P65977</id>
    </interactant>
    <interactant intactId="EBI-10686956">
        <id>P06110</id>
        <label>cheW</label>
    </interactant>
    <organismsDiffer>false</organismsDiffer>
    <experiments>3</experiments>
</comment>
<comment type="subcellular location">
    <subcellularLocation>
        <location evidence="1">Cytoplasm</location>
    </subcellularLocation>
</comment>
<comment type="similarity">
    <text evidence="1">Belongs to the RecA family.</text>
</comment>
<sequence length="353" mass="37944">MAIDENKQKALAAALGQIEKQFGKGSIMRLGEDRSMDVETISTGSLSLDIALGAGGLPMGRIVEIYGPESSGKTTLTLQVIAAAQREGKTCAFIDAEHALDPVYARKLGVDIDNLLCSQPDTGEQALEICDALARSGAVDVIVVDSVAALTPKAEIEGEIGDSHMGLAARMMSQAMRKLAGNLKQSNTLLIFINQIRMKIGVMFGNPETTTGGNALKFYASVRLDIRRIGAVKEGDNVVGSETRVKVVKNKIAAPFKQAEFQILYGEGINFYGELVDLGVKEKLIEKAGAWYSYNGEKIGQGKANATTWLKENPATAKEIEKRVRELLLSNQNATPDFAVDDSEGVAETNEDF</sequence>
<feature type="initiator methionine" description="Removed">
    <location>
        <position position="1"/>
    </location>
</feature>
<feature type="chain" id="PRO_0000122829" description="Protein RecA">
    <location>
        <begin position="2"/>
        <end position="353"/>
    </location>
</feature>
<feature type="binding site" evidence="1">
    <location>
        <begin position="67"/>
        <end position="74"/>
    </location>
    <ligand>
        <name>ATP</name>
        <dbReference type="ChEBI" id="CHEBI:30616"/>
    </ligand>
</feature>